<organism>
    <name type="scientific">Methanosarcina acetivorans (strain ATCC 35395 / DSM 2834 / JCM 12185 / C2A)</name>
    <dbReference type="NCBI Taxonomy" id="188937"/>
    <lineage>
        <taxon>Archaea</taxon>
        <taxon>Methanobacteriati</taxon>
        <taxon>Methanobacteriota</taxon>
        <taxon>Stenosarchaea group</taxon>
        <taxon>Methanomicrobia</taxon>
        <taxon>Methanosarcinales</taxon>
        <taxon>Methanosarcinaceae</taxon>
        <taxon>Methanosarcina</taxon>
    </lineage>
</organism>
<comment type="function">
    <text evidence="1">Catalyzes the methylation of C-15 in cobalt-precorrin-6B followed by the decarboxylation of C-12 to form cobalt-precorrin-7.</text>
</comment>
<comment type="catalytic activity">
    <reaction evidence="1">
        <text>Co-precorrin-6B + S-adenosyl-L-methionine = Co-precorrin-7 + S-adenosyl-L-homocysteine + CO2</text>
        <dbReference type="Rhea" id="RHEA:36067"/>
        <dbReference type="ChEBI" id="CHEBI:16526"/>
        <dbReference type="ChEBI" id="CHEBI:57856"/>
        <dbReference type="ChEBI" id="CHEBI:59789"/>
        <dbReference type="ChEBI" id="CHEBI:70791"/>
        <dbReference type="ChEBI" id="CHEBI:72780"/>
        <dbReference type="EC" id="2.1.1.196"/>
    </reaction>
</comment>
<comment type="pathway">
    <text evidence="1">Cofactor biosynthesis; adenosylcobalamin biosynthesis; cob(II)yrinate a,c-diamide from sirohydrochlorin (anaerobic route): step 8/10.</text>
</comment>
<comment type="similarity">
    <text evidence="1">Belongs to the methyltransferase superfamily. Archaeal-type CbiT family.</text>
</comment>
<keyword id="KW-0169">Cobalamin biosynthesis</keyword>
<keyword id="KW-0489">Methyltransferase</keyword>
<keyword id="KW-1185">Reference proteome</keyword>
<keyword id="KW-0949">S-adenosyl-L-methionine</keyword>
<keyword id="KW-0808">Transferase</keyword>
<evidence type="ECO:0000255" key="1">
    <source>
        <dbReference type="HAMAP-Rule" id="MF_00786"/>
    </source>
</evidence>
<dbReference type="EC" id="2.1.1.196" evidence="1"/>
<dbReference type="EMBL" id="AE010299">
    <property type="protein sequence ID" value="AAM07607.1"/>
    <property type="molecule type" value="Genomic_DNA"/>
</dbReference>
<dbReference type="RefSeq" id="WP_011024144.1">
    <property type="nucleotide sequence ID" value="NC_003552.1"/>
</dbReference>
<dbReference type="SMR" id="Q8TI93"/>
<dbReference type="FunCoup" id="Q8TI93">
    <property type="interactions" value="94"/>
</dbReference>
<dbReference type="STRING" id="188937.MA_4263"/>
<dbReference type="EnsemblBacteria" id="AAM07607">
    <property type="protein sequence ID" value="AAM07607"/>
    <property type="gene ID" value="MA_4263"/>
</dbReference>
<dbReference type="GeneID" id="1476157"/>
<dbReference type="KEGG" id="mac:MA_4263"/>
<dbReference type="HOGENOM" id="CLU_094143_1_0_2"/>
<dbReference type="InParanoid" id="Q8TI93"/>
<dbReference type="OrthoDB" id="6027at2157"/>
<dbReference type="PhylomeDB" id="Q8TI93"/>
<dbReference type="UniPathway" id="UPA00148">
    <property type="reaction ID" value="UER00229"/>
</dbReference>
<dbReference type="Proteomes" id="UP000002487">
    <property type="component" value="Chromosome"/>
</dbReference>
<dbReference type="GO" id="GO:0043776">
    <property type="term" value="F:cobalt-precorrin-6B C5-methyltransferase activity"/>
    <property type="evidence" value="ECO:0007669"/>
    <property type="project" value="RHEA"/>
</dbReference>
<dbReference type="GO" id="GO:0008276">
    <property type="term" value="F:protein methyltransferase activity"/>
    <property type="evidence" value="ECO:0007669"/>
    <property type="project" value="InterPro"/>
</dbReference>
<dbReference type="GO" id="GO:0019251">
    <property type="term" value="P:anaerobic cobalamin biosynthetic process"/>
    <property type="evidence" value="ECO:0007669"/>
    <property type="project" value="UniProtKB-UniRule"/>
</dbReference>
<dbReference type="GO" id="GO:0032259">
    <property type="term" value="P:methylation"/>
    <property type="evidence" value="ECO:0007669"/>
    <property type="project" value="UniProtKB-KW"/>
</dbReference>
<dbReference type="Gene3D" id="3.40.50.150">
    <property type="entry name" value="Vaccinia Virus protein VP39"/>
    <property type="match status" value="1"/>
</dbReference>
<dbReference type="HAMAP" id="MF_00786">
    <property type="entry name" value="CbiT"/>
    <property type="match status" value="1"/>
</dbReference>
<dbReference type="InterPro" id="IPR023475">
    <property type="entry name" value="CbiT"/>
</dbReference>
<dbReference type="InterPro" id="IPR014008">
    <property type="entry name" value="Cbl_synth_MTase_CbiT"/>
</dbReference>
<dbReference type="InterPro" id="IPR050714">
    <property type="entry name" value="Cobalamin_biosynth_MTase"/>
</dbReference>
<dbReference type="InterPro" id="IPR025714">
    <property type="entry name" value="Methyltranfer_dom"/>
</dbReference>
<dbReference type="InterPro" id="IPR029063">
    <property type="entry name" value="SAM-dependent_MTases_sf"/>
</dbReference>
<dbReference type="NCBIfam" id="TIGR02469">
    <property type="entry name" value="CbiT"/>
    <property type="match status" value="1"/>
</dbReference>
<dbReference type="PANTHER" id="PTHR43182">
    <property type="entry name" value="COBALT-PRECORRIN-6B C(15)-METHYLTRANSFERASE (DECARBOXYLATING)"/>
    <property type="match status" value="1"/>
</dbReference>
<dbReference type="PANTHER" id="PTHR43182:SF1">
    <property type="entry name" value="COBALT-PRECORRIN-7 C(5)-METHYLTRANSFERASE"/>
    <property type="match status" value="1"/>
</dbReference>
<dbReference type="Pfam" id="PF13847">
    <property type="entry name" value="Methyltransf_31"/>
    <property type="match status" value="1"/>
</dbReference>
<dbReference type="SUPFAM" id="SSF53335">
    <property type="entry name" value="S-adenosyl-L-methionine-dependent methyltransferases"/>
    <property type="match status" value="1"/>
</dbReference>
<sequence>MSEIVSVSGGPTKPEIIAVSLSKLGLQDGDRFADVGCGTGSVSIEAARIARNLTIYAIDARKEALLATEANFKSFGIENARVLAGEASELLGSGGSIDSIDCAFVGGTKNIDAILEKLVEKKTRSIVVNAVRIETVVRTIEAMKKLGIFDEVVHISVSRSAPIAGETMFKPENPVYIVVGKKQA</sequence>
<name>CBIT_METAC</name>
<accession>Q8TI93</accession>
<proteinExistence type="inferred from homology"/>
<feature type="chain" id="PRO_0000134937" description="Probable cobalt-precorrin-6B C(15)-methyltransferase (decarboxylating)">
    <location>
        <begin position="1"/>
        <end position="184"/>
    </location>
</feature>
<feature type="binding site" evidence="1">
    <location>
        <position position="12"/>
    </location>
    <ligand>
        <name>S-adenosyl-L-methionine</name>
        <dbReference type="ChEBI" id="CHEBI:59789"/>
    </ligand>
</feature>
<feature type="binding site" evidence="1">
    <location>
        <begin position="36"/>
        <end position="40"/>
    </location>
    <ligand>
        <name>S-adenosyl-L-methionine</name>
        <dbReference type="ChEBI" id="CHEBI:59789"/>
    </ligand>
</feature>
<feature type="binding site" evidence="1">
    <location>
        <position position="59"/>
    </location>
    <ligand>
        <name>S-adenosyl-L-methionine</name>
        <dbReference type="ChEBI" id="CHEBI:59789"/>
    </ligand>
</feature>
<feature type="binding site" evidence="1">
    <location>
        <position position="87"/>
    </location>
    <ligand>
        <name>S-adenosyl-L-methionine</name>
        <dbReference type="ChEBI" id="CHEBI:59789"/>
    </ligand>
</feature>
<protein>
    <recommendedName>
        <fullName evidence="1">Probable cobalt-precorrin-6B C(15)-methyltransferase (decarboxylating)</fullName>
        <ecNumber evidence="1">2.1.1.196</ecNumber>
    </recommendedName>
</protein>
<reference key="1">
    <citation type="journal article" date="2002" name="Genome Res.">
        <title>The genome of Methanosarcina acetivorans reveals extensive metabolic and physiological diversity.</title>
        <authorList>
            <person name="Galagan J.E."/>
            <person name="Nusbaum C."/>
            <person name="Roy A."/>
            <person name="Endrizzi M.G."/>
            <person name="Macdonald P."/>
            <person name="FitzHugh W."/>
            <person name="Calvo S."/>
            <person name="Engels R."/>
            <person name="Smirnov S."/>
            <person name="Atnoor D."/>
            <person name="Brown A."/>
            <person name="Allen N."/>
            <person name="Naylor J."/>
            <person name="Stange-Thomann N."/>
            <person name="DeArellano K."/>
            <person name="Johnson R."/>
            <person name="Linton L."/>
            <person name="McEwan P."/>
            <person name="McKernan K."/>
            <person name="Talamas J."/>
            <person name="Tirrell A."/>
            <person name="Ye W."/>
            <person name="Zimmer A."/>
            <person name="Barber R.D."/>
            <person name="Cann I."/>
            <person name="Graham D.E."/>
            <person name="Grahame D.A."/>
            <person name="Guss A.M."/>
            <person name="Hedderich R."/>
            <person name="Ingram-Smith C."/>
            <person name="Kuettner H.C."/>
            <person name="Krzycki J.A."/>
            <person name="Leigh J.A."/>
            <person name="Li W."/>
            <person name="Liu J."/>
            <person name="Mukhopadhyay B."/>
            <person name="Reeve J.N."/>
            <person name="Smith K."/>
            <person name="Springer T.A."/>
            <person name="Umayam L.A."/>
            <person name="White O."/>
            <person name="White R.H."/>
            <person name="de Macario E.C."/>
            <person name="Ferry J.G."/>
            <person name="Jarrell K.F."/>
            <person name="Jing H."/>
            <person name="Macario A.J.L."/>
            <person name="Paulsen I.T."/>
            <person name="Pritchett M."/>
            <person name="Sowers K.R."/>
            <person name="Swanson R.V."/>
            <person name="Zinder S.H."/>
            <person name="Lander E."/>
            <person name="Metcalf W.W."/>
            <person name="Birren B."/>
        </authorList>
    </citation>
    <scope>NUCLEOTIDE SEQUENCE [LARGE SCALE GENOMIC DNA]</scope>
    <source>
        <strain>ATCC 35395 / DSM 2834 / JCM 12185 / C2A</strain>
    </source>
</reference>
<gene>
    <name evidence="1" type="primary">cbiT</name>
    <name type="ordered locus">MA_4263</name>
</gene>